<proteinExistence type="evidence at transcript level"/>
<accession>Q6DRJ7</accession>
<accession>Q502U1</accession>
<evidence type="ECO:0000250" key="1"/>
<evidence type="ECO:0000250" key="2">
    <source>
        <dbReference type="UniProtKB" id="O14777"/>
    </source>
</evidence>
<evidence type="ECO:0000250" key="3">
    <source>
        <dbReference type="UniProtKB" id="Q8AWF5"/>
    </source>
</evidence>
<evidence type="ECO:0000255" key="4"/>
<evidence type="ECO:0000305" key="5"/>
<comment type="function">
    <text evidence="2">Acts as a component of the essential kinetochore-associated NDC80 complex, which is required for chromosome segregation and spindle checkpoint activity. Required for kinetochore integrity and the organization of stable microtubule binding sites in the outer plate of the kinetochore. The NDC80 complex synergistically enhances the affinity of the SKA1 complex for microtubules and may allow the NDC80 complex to track depolymerizing microtubules. May play a role in chromosome congression and may be essential for the end-on attachment of the kinetochores to spindle microtubules.</text>
</comment>
<comment type="subunit">
    <text evidence="1">Component of the NDC80 complex, which is composed of ndc80, cdca1, spbc24 and spbc25.</text>
</comment>
<comment type="subcellular location">
    <subcellularLocation>
        <location evidence="3">Nucleus</location>
    </subcellularLocation>
    <subcellularLocation>
        <location evidence="3">Chromosome</location>
        <location evidence="3">Centromere</location>
        <location evidence="3">Kinetochore</location>
    </subcellularLocation>
    <text evidence="3">Localizes to kinetochores from late prophase to anaphase.</text>
</comment>
<comment type="similarity">
    <text evidence="5">Belongs to the NDC80/HEC1 family.</text>
</comment>
<comment type="sequence caution" evidence="5">
    <conflict type="miscellaneous discrepancy">
        <sequence resource="EMBL-CDS" id="AAH95554"/>
    </conflict>
    <text>Artifact. Missing internal sequence that doesn't correspond to an exon-intron boundary.</text>
</comment>
<keyword id="KW-0131">Cell cycle</keyword>
<keyword id="KW-0132">Cell division</keyword>
<keyword id="KW-0137">Centromere</keyword>
<keyword id="KW-0158">Chromosome</keyword>
<keyword id="KW-0175">Coiled coil</keyword>
<keyword id="KW-0995">Kinetochore</keyword>
<keyword id="KW-0498">Mitosis</keyword>
<keyword id="KW-0539">Nucleus</keyword>
<keyword id="KW-1185">Reference proteome</keyword>
<protein>
    <recommendedName>
        <fullName>Kinetochore protein NDC80 homolog</fullName>
    </recommendedName>
    <alternativeName>
        <fullName>Kinetochore protein Hec1</fullName>
    </alternativeName>
    <alternativeName>
        <fullName>Kinetochore-associated protein 2-like</fullName>
    </alternativeName>
</protein>
<organism>
    <name type="scientific">Danio rerio</name>
    <name type="common">Zebrafish</name>
    <name type="synonym">Brachydanio rerio</name>
    <dbReference type="NCBI Taxonomy" id="7955"/>
    <lineage>
        <taxon>Eukaryota</taxon>
        <taxon>Metazoa</taxon>
        <taxon>Chordata</taxon>
        <taxon>Craniata</taxon>
        <taxon>Vertebrata</taxon>
        <taxon>Euteleostomi</taxon>
        <taxon>Actinopterygii</taxon>
        <taxon>Neopterygii</taxon>
        <taxon>Teleostei</taxon>
        <taxon>Ostariophysi</taxon>
        <taxon>Cypriniformes</taxon>
        <taxon>Danionidae</taxon>
        <taxon>Danioninae</taxon>
        <taxon>Danio</taxon>
    </lineage>
</organism>
<gene>
    <name type="primary">ndc80</name>
    <name type="synonym">kntc2</name>
    <name type="synonym">kntc2l</name>
    <name type="ORF">zgc:111801</name>
</gene>
<dbReference type="EMBL" id="AY648762">
    <property type="protein sequence ID" value="AAT68080.1"/>
    <property type="molecule type" value="mRNA"/>
</dbReference>
<dbReference type="EMBL" id="BC095554">
    <property type="protein sequence ID" value="AAH95554.1"/>
    <property type="status" value="ALT_SEQ"/>
    <property type="molecule type" value="mRNA"/>
</dbReference>
<dbReference type="RefSeq" id="NP_001003863.1">
    <property type="nucleotide sequence ID" value="NM_001003863.1"/>
</dbReference>
<dbReference type="SMR" id="Q6DRJ7"/>
<dbReference type="FunCoup" id="Q6DRJ7">
    <property type="interactions" value="1881"/>
</dbReference>
<dbReference type="STRING" id="7955.ENSDARP00000012236"/>
<dbReference type="PaxDb" id="7955-ENSDARP00000012236"/>
<dbReference type="Ensembl" id="ENSDART00000007335">
    <property type="protein sequence ID" value="ENSDARP00000012236"/>
    <property type="gene ID" value="ENSDARG00000071694"/>
</dbReference>
<dbReference type="GeneID" id="445386"/>
<dbReference type="KEGG" id="dre:445386"/>
<dbReference type="AGR" id="ZFIN:ZDB-GENE-030131-904"/>
<dbReference type="CTD" id="10403"/>
<dbReference type="ZFIN" id="ZDB-GENE-030131-904">
    <property type="gene designation" value="ndc80"/>
</dbReference>
<dbReference type="eggNOG" id="KOG0995">
    <property type="taxonomic scope" value="Eukaryota"/>
</dbReference>
<dbReference type="HOGENOM" id="CLU_012583_2_0_1"/>
<dbReference type="InParanoid" id="Q6DRJ7"/>
<dbReference type="OMA" id="PSHKFQK"/>
<dbReference type="OrthoDB" id="7459479at2759"/>
<dbReference type="PhylomeDB" id="Q6DRJ7"/>
<dbReference type="TreeFam" id="TF101177"/>
<dbReference type="PRO" id="PR:Q6DRJ7"/>
<dbReference type="Proteomes" id="UP000000437">
    <property type="component" value="Chromosome 12"/>
</dbReference>
<dbReference type="Bgee" id="ENSDARG00000071694">
    <property type="expression patterns" value="Expressed in testis and 29 other cell types or tissues"/>
</dbReference>
<dbReference type="ExpressionAtlas" id="Q6DRJ7">
    <property type="expression patterns" value="baseline and differential"/>
</dbReference>
<dbReference type="GO" id="GO:0000776">
    <property type="term" value="C:kinetochore"/>
    <property type="evidence" value="ECO:0000250"/>
    <property type="project" value="UniProtKB"/>
</dbReference>
<dbReference type="GO" id="GO:0031262">
    <property type="term" value="C:Ndc80 complex"/>
    <property type="evidence" value="ECO:0000250"/>
    <property type="project" value="UniProtKB"/>
</dbReference>
<dbReference type="GO" id="GO:0005634">
    <property type="term" value="C:nucleus"/>
    <property type="evidence" value="ECO:0007669"/>
    <property type="project" value="UniProtKB-SubCell"/>
</dbReference>
<dbReference type="GO" id="GO:0140483">
    <property type="term" value="F:kinetochore adaptor activity"/>
    <property type="evidence" value="ECO:0000250"/>
    <property type="project" value="UniProtKB"/>
</dbReference>
<dbReference type="GO" id="GO:0008017">
    <property type="term" value="F:microtubule binding"/>
    <property type="evidence" value="ECO:0000250"/>
    <property type="project" value="UniProtKB"/>
</dbReference>
<dbReference type="GO" id="GO:0051315">
    <property type="term" value="P:attachment of mitotic spindle microtubules to kinetochore"/>
    <property type="evidence" value="ECO:0000250"/>
    <property type="project" value="UniProtKB"/>
</dbReference>
<dbReference type="GO" id="GO:0051301">
    <property type="term" value="P:cell division"/>
    <property type="evidence" value="ECO:0007669"/>
    <property type="project" value="UniProtKB-KW"/>
</dbReference>
<dbReference type="GO" id="GO:0007059">
    <property type="term" value="P:chromosome segregation"/>
    <property type="evidence" value="ECO:0000250"/>
    <property type="project" value="UniProtKB"/>
</dbReference>
<dbReference type="GO" id="GO:0051310">
    <property type="term" value="P:metaphase chromosome alignment"/>
    <property type="evidence" value="ECO:0000250"/>
    <property type="project" value="UniProtKB"/>
</dbReference>
<dbReference type="GO" id="GO:1990758">
    <property type="term" value="P:mitotic sister chromatid biorientation"/>
    <property type="evidence" value="ECO:0000250"/>
    <property type="project" value="UniProtKB"/>
</dbReference>
<dbReference type="GO" id="GO:0007052">
    <property type="term" value="P:mitotic spindle organization"/>
    <property type="evidence" value="ECO:0000250"/>
    <property type="project" value="UniProtKB"/>
</dbReference>
<dbReference type="GO" id="GO:0090267">
    <property type="term" value="P:positive regulation of mitotic cell cycle spindle assembly checkpoint"/>
    <property type="evidence" value="ECO:0000250"/>
    <property type="project" value="UniProtKB"/>
</dbReference>
<dbReference type="FunFam" id="1.10.418.30:FF:000002">
    <property type="entry name" value="NDC80, kinetochore complex component"/>
    <property type="match status" value="1"/>
</dbReference>
<dbReference type="Gene3D" id="6.10.250.1950">
    <property type="match status" value="1"/>
</dbReference>
<dbReference type="Gene3D" id="1.10.418.30">
    <property type="entry name" value="Ncd80 complex, Ncd80 subunit"/>
    <property type="match status" value="1"/>
</dbReference>
<dbReference type="InterPro" id="IPR040967">
    <property type="entry name" value="DUF5595"/>
</dbReference>
<dbReference type="InterPro" id="IPR005550">
    <property type="entry name" value="Kinetochore_Ndc80"/>
</dbReference>
<dbReference type="InterPro" id="IPR055260">
    <property type="entry name" value="Ndc80_CH"/>
</dbReference>
<dbReference type="InterPro" id="IPR038273">
    <property type="entry name" value="Ndc80_sf"/>
</dbReference>
<dbReference type="PANTHER" id="PTHR10643">
    <property type="entry name" value="KINETOCHORE PROTEIN NDC80"/>
    <property type="match status" value="1"/>
</dbReference>
<dbReference type="PANTHER" id="PTHR10643:SF2">
    <property type="entry name" value="KINETOCHORE PROTEIN NDC80 HOMOLOG"/>
    <property type="match status" value="1"/>
</dbReference>
<dbReference type="Pfam" id="PF18077">
    <property type="entry name" value="DUF5595"/>
    <property type="match status" value="1"/>
</dbReference>
<dbReference type="Pfam" id="PF03801">
    <property type="entry name" value="Ndc80_HEC"/>
    <property type="match status" value="1"/>
</dbReference>
<dbReference type="Pfam" id="PF24487">
    <property type="entry name" value="NDC80_loop"/>
    <property type="match status" value="1"/>
</dbReference>
<reference key="1">
    <citation type="journal article" date="2004" name="Proc. Natl. Acad. Sci. U.S.A.">
        <title>Identification of 315 genes essential for early zebrafish development.</title>
        <authorList>
            <person name="Amsterdam A."/>
            <person name="Nissen R.M."/>
            <person name="Sun Z."/>
            <person name="Swindell E.C."/>
            <person name="Farrington S."/>
            <person name="Hopkins N."/>
        </authorList>
    </citation>
    <scope>NUCLEOTIDE SEQUENCE [LARGE SCALE MRNA]</scope>
    <source>
        <tissue>Embryo</tissue>
    </source>
</reference>
<reference key="2">
    <citation type="submission" date="2005-05" db="EMBL/GenBank/DDBJ databases">
        <authorList>
            <consortium name="NIH - Zebrafish Gene Collection (ZGC) project"/>
        </authorList>
    </citation>
    <scope>NUCLEOTIDE SEQUENCE [LARGE SCALE MRNA]</scope>
    <source>
        <tissue>Liver</tissue>
    </source>
</reference>
<name>NDC80_DANRE</name>
<feature type="chain" id="PRO_0000249554" description="Kinetochore protein NDC80 homolog">
    <location>
        <begin position="1"/>
        <end position="632"/>
    </location>
</feature>
<feature type="coiled-coil region" evidence="4">
    <location>
        <begin position="263"/>
        <end position="419"/>
    </location>
</feature>
<feature type="coiled-coil region" evidence="4">
    <location>
        <begin position="459"/>
        <end position="632"/>
    </location>
</feature>
<feature type="sequence conflict" description="In Ref. 2; AAH95554." evidence="5" ref="2">
    <original>L</original>
    <variation>H</variation>
    <location>
        <position position="162"/>
    </location>
</feature>
<feature type="sequence conflict" description="In Ref. 2; AAH95554." evidence="5" ref="2">
    <original>N</original>
    <variation>R</variation>
    <location>
        <position position="392"/>
    </location>
</feature>
<feature type="sequence conflict" description="In Ref. 2; AAH95554." evidence="5" ref="2">
    <original>L</original>
    <variation>R</variation>
    <location>
        <position position="618"/>
    </location>
</feature>
<sequence>MSRRPSSRYSEMPMRVTDSRMSLINATPQNKDNAFGKLNIPKPQSTTSERRTSFFGKGIGAGGQRNSMFGSYGGSEKMKDPRALHDKAFVQQCIKQLYEFLVDRGFPGSITVKALQSPSTKEFLKIYEFIYNFLEPSFQMPTAKVEEEIPRMLKDLGYPFALSKSSMYSIGAPHTWPLALGALIWLMDAVKLFGGQREQDLLFSDFSDELCDLEDRTEYNKLIMEYCSDTYNKFMQGADTFDDEDDDFLYKLKKLYNVDEALLHSQQEKHSMLMEHVERLERESQTDRLVGKRTEKLRLQTDLQKLQNYRCTLEAHKTGLENKSAGLTEELEAVEMQLEGLKQERTRLQHILENQKFTPADIERINRERNELQQTIHGLSQSLEEGEQLVWNEEVNLSKTKEKAELKVAEYNKLGRKLKLIPLSAENACGHDFEIRADYSATTITQYKTQIQNPLKNMMVEVEEEFSRLSNVNLSLEETVEQVKSNIFDKENDIKQLKEQIRKVDQQLENAMQEMALEDDKWAAELDSAETHKKLFEKNVMQGIEEAEEEVKAAQQQYHVVVQETNEKNRMVVKNMTDLFSSTVNHLFAVEKHCDEQLKRFDKLKDIVREDEADINQLTDLVENFIKKANSL</sequence>